<feature type="chain" id="PRO_1000066180" description="Protein-methionine-sulfoxide reductase heme-binding subunit MsrQ">
    <location>
        <begin position="1"/>
        <end position="202"/>
    </location>
</feature>
<feature type="transmembrane region" description="Helical" evidence="1">
    <location>
        <begin position="8"/>
        <end position="28"/>
    </location>
</feature>
<feature type="transmembrane region" description="Helical" evidence="1">
    <location>
        <begin position="42"/>
        <end position="62"/>
    </location>
</feature>
<feature type="transmembrane region" description="Helical" evidence="1">
    <location>
        <begin position="75"/>
        <end position="95"/>
    </location>
</feature>
<feature type="transmembrane region" description="Helical" evidence="1">
    <location>
        <begin position="110"/>
        <end position="130"/>
    </location>
</feature>
<feature type="transmembrane region" description="Helical" evidence="1">
    <location>
        <begin position="147"/>
        <end position="167"/>
    </location>
</feature>
<feature type="transmembrane region" description="Helical" evidence="1">
    <location>
        <begin position="169"/>
        <end position="189"/>
    </location>
</feature>
<gene>
    <name evidence="1" type="primary">msrQ</name>
    <name type="ordered locus">PSPA7_5405</name>
</gene>
<protein>
    <recommendedName>
        <fullName evidence="1">Protein-methionine-sulfoxide reductase heme-binding subunit MsrQ</fullName>
    </recommendedName>
    <alternativeName>
        <fullName evidence="1">Flavocytochrome MsrQ</fullName>
    </alternativeName>
</protein>
<accession>A6VCE4</accession>
<organism>
    <name type="scientific">Pseudomonas paraeruginosa (strain DSM 24068 / PA7)</name>
    <name type="common">Pseudomonas aeruginosa (strain PA7)</name>
    <dbReference type="NCBI Taxonomy" id="381754"/>
    <lineage>
        <taxon>Bacteria</taxon>
        <taxon>Pseudomonadati</taxon>
        <taxon>Pseudomonadota</taxon>
        <taxon>Gammaproteobacteria</taxon>
        <taxon>Pseudomonadales</taxon>
        <taxon>Pseudomonadaceae</taxon>
        <taxon>Pseudomonas</taxon>
        <taxon>Pseudomonas paraeruginosa</taxon>
    </lineage>
</organism>
<sequence>MRYWYLRLAVFLGALAMPAWWLYQAWIFALGPDPGKTLVDRLGLGALVLLLLTLAMTPLQKLSGWPGWIAVRRQLGLWCFTYALLHLSAYCVFILGLDWGQLGIELSKRPYIIVGMLGFICLFLLAITSNRFAMRKLGSRWKKLHRLVYLILGLGLLHMLWVVRADLEEWTLYAVVGASLMLLRLPSIARRLPRLRGRPGVS</sequence>
<comment type="function">
    <text evidence="1">Part of the MsrPQ system that repairs oxidized periplasmic proteins containing methionine sulfoxide residues (Met-O), using respiratory chain electrons. Thus protects these proteins from oxidative-stress damage caused by reactive species of oxygen and chlorine generated by the host defense mechanisms. MsrPQ is essential for the maintenance of envelope integrity under bleach stress, rescuing a wide series of structurally unrelated periplasmic proteins from methionine oxidation. MsrQ provides electrons for reduction to the reductase catalytic subunit MsrP, using the quinone pool of the respiratory chain.</text>
</comment>
<comment type="cofactor">
    <cofactor evidence="1">
        <name>FMN</name>
        <dbReference type="ChEBI" id="CHEBI:58210"/>
    </cofactor>
    <text evidence="1">Binds 1 FMN per subunit.</text>
</comment>
<comment type="cofactor">
    <cofactor evidence="1">
        <name>heme b</name>
        <dbReference type="ChEBI" id="CHEBI:60344"/>
    </cofactor>
    <text evidence="1">Binds 1 heme b (iron(II)-protoporphyrin IX) group per subunit.</text>
</comment>
<comment type="subunit">
    <text evidence="1">Heterodimer of a catalytic subunit (MsrP) and a heme-binding subunit (MsrQ).</text>
</comment>
<comment type="subcellular location">
    <subcellularLocation>
        <location evidence="1">Cell inner membrane</location>
        <topology evidence="1">Multi-pass membrane protein</topology>
    </subcellularLocation>
</comment>
<comment type="similarity">
    <text evidence="1">Belongs to the MsrQ family.</text>
</comment>
<dbReference type="EMBL" id="CP000744">
    <property type="protein sequence ID" value="ABR81034.1"/>
    <property type="molecule type" value="Genomic_DNA"/>
</dbReference>
<dbReference type="RefSeq" id="WP_012077452.1">
    <property type="nucleotide sequence ID" value="NC_009656.1"/>
</dbReference>
<dbReference type="SMR" id="A6VCE4"/>
<dbReference type="KEGG" id="pap:PSPA7_5405"/>
<dbReference type="HOGENOM" id="CLU_080662_0_1_6"/>
<dbReference type="Proteomes" id="UP000001582">
    <property type="component" value="Chromosome"/>
</dbReference>
<dbReference type="GO" id="GO:0005886">
    <property type="term" value="C:plasma membrane"/>
    <property type="evidence" value="ECO:0007669"/>
    <property type="project" value="UniProtKB-SubCell"/>
</dbReference>
<dbReference type="GO" id="GO:0009055">
    <property type="term" value="F:electron transfer activity"/>
    <property type="evidence" value="ECO:0007669"/>
    <property type="project" value="UniProtKB-UniRule"/>
</dbReference>
<dbReference type="GO" id="GO:0010181">
    <property type="term" value="F:FMN binding"/>
    <property type="evidence" value="ECO:0007669"/>
    <property type="project" value="UniProtKB-UniRule"/>
</dbReference>
<dbReference type="GO" id="GO:0020037">
    <property type="term" value="F:heme binding"/>
    <property type="evidence" value="ECO:0007669"/>
    <property type="project" value="UniProtKB-UniRule"/>
</dbReference>
<dbReference type="GO" id="GO:0046872">
    <property type="term" value="F:metal ion binding"/>
    <property type="evidence" value="ECO:0007669"/>
    <property type="project" value="UniProtKB-KW"/>
</dbReference>
<dbReference type="GO" id="GO:0016679">
    <property type="term" value="F:oxidoreductase activity, acting on diphenols and related substances as donors"/>
    <property type="evidence" value="ECO:0007669"/>
    <property type="project" value="TreeGrafter"/>
</dbReference>
<dbReference type="GO" id="GO:0030091">
    <property type="term" value="P:protein repair"/>
    <property type="evidence" value="ECO:0007669"/>
    <property type="project" value="UniProtKB-UniRule"/>
</dbReference>
<dbReference type="HAMAP" id="MF_01207">
    <property type="entry name" value="MsrQ"/>
    <property type="match status" value="1"/>
</dbReference>
<dbReference type="InterPro" id="IPR013130">
    <property type="entry name" value="Fe3_Rdtase_TM_dom"/>
</dbReference>
<dbReference type="InterPro" id="IPR022837">
    <property type="entry name" value="MsrQ-like"/>
</dbReference>
<dbReference type="NCBIfam" id="NF003831">
    <property type="entry name" value="PRK05419.1-2"/>
    <property type="match status" value="1"/>
</dbReference>
<dbReference type="PANTHER" id="PTHR36964">
    <property type="entry name" value="PROTEIN-METHIONINE-SULFOXIDE REDUCTASE HEME-BINDING SUBUNIT MSRQ"/>
    <property type="match status" value="1"/>
</dbReference>
<dbReference type="PANTHER" id="PTHR36964:SF1">
    <property type="entry name" value="PROTEIN-METHIONINE-SULFOXIDE REDUCTASE HEME-BINDING SUBUNIT MSRQ"/>
    <property type="match status" value="1"/>
</dbReference>
<dbReference type="Pfam" id="PF01794">
    <property type="entry name" value="Ferric_reduct"/>
    <property type="match status" value="1"/>
</dbReference>
<reference key="1">
    <citation type="submission" date="2007-06" db="EMBL/GenBank/DDBJ databases">
        <authorList>
            <person name="Dodson R.J."/>
            <person name="Harkins D."/>
            <person name="Paulsen I.T."/>
        </authorList>
    </citation>
    <scope>NUCLEOTIDE SEQUENCE [LARGE SCALE GENOMIC DNA]</scope>
    <source>
        <strain>DSM 24068 / PA7</strain>
    </source>
</reference>
<keyword id="KW-0997">Cell inner membrane</keyword>
<keyword id="KW-1003">Cell membrane</keyword>
<keyword id="KW-0249">Electron transport</keyword>
<keyword id="KW-0285">Flavoprotein</keyword>
<keyword id="KW-0288">FMN</keyword>
<keyword id="KW-0349">Heme</keyword>
<keyword id="KW-0408">Iron</keyword>
<keyword id="KW-0472">Membrane</keyword>
<keyword id="KW-0479">Metal-binding</keyword>
<keyword id="KW-0812">Transmembrane</keyword>
<keyword id="KW-1133">Transmembrane helix</keyword>
<keyword id="KW-0813">Transport</keyword>
<proteinExistence type="inferred from homology"/>
<name>MSRQ_PSEP7</name>
<evidence type="ECO:0000255" key="1">
    <source>
        <dbReference type="HAMAP-Rule" id="MF_01207"/>
    </source>
</evidence>